<sequence>MKAGRYEYRWADGTTMVSAPEYVELLMNWIETQIDNEHIFPKKTGEPFPPNFEDFVKRILRKLFRVYAHIYHSHFPKIVTLNEQAHLNTCFHRYLLFVSEFQLVDKEEMVPIQKLVETILKP</sequence>
<comment type="subcellular location">
    <subcellularLocation>
        <location evidence="2">Nucleus</location>
    </subcellularLocation>
    <subcellularLocation>
        <location evidence="2">Cytoplasm</location>
        <location evidence="2">Cytoskeleton</location>
        <location evidence="2">Phragmoplast</location>
    </subcellularLocation>
</comment>
<comment type="similarity">
    <text evidence="4">Belongs to the MOB1/phocein family.</text>
</comment>
<comment type="caution">
    <text evidence="4">Could be the product of a pseudogene. Lacks two of the four zinc-binding sites, which are conserved features of the MOB1/phocein family.</text>
</comment>
<dbReference type="EMBL" id="AF296833">
    <property type="status" value="NOT_ANNOTATED_CDS"/>
    <property type="molecule type" value="Genomic_DNA"/>
</dbReference>
<dbReference type="EMBL" id="CP002688">
    <property type="protein sequence ID" value="AED92842.1"/>
    <property type="molecule type" value="Genomic_DNA"/>
</dbReference>
<dbReference type="RefSeq" id="NP_197543.1">
    <property type="nucleotide sequence ID" value="NM_122050.2"/>
</dbReference>
<dbReference type="SMR" id="F4K494"/>
<dbReference type="STRING" id="3702.F4K494"/>
<dbReference type="PaxDb" id="3702-AT5G20430.1"/>
<dbReference type="EnsemblPlants" id="AT5G20430.1">
    <property type="protein sequence ID" value="AT5G20430.1"/>
    <property type="gene ID" value="AT5G20430"/>
</dbReference>
<dbReference type="GeneID" id="832165"/>
<dbReference type="Gramene" id="AT5G20430.1">
    <property type="protein sequence ID" value="AT5G20430.1"/>
    <property type="gene ID" value="AT5G20430"/>
</dbReference>
<dbReference type="KEGG" id="ath:AT5G20430"/>
<dbReference type="Araport" id="AT5G20430"/>
<dbReference type="TAIR" id="AT5G20430"/>
<dbReference type="eggNOG" id="KOG0440">
    <property type="taxonomic scope" value="Eukaryota"/>
</dbReference>
<dbReference type="HOGENOM" id="CLU_038321_7_0_1"/>
<dbReference type="InParanoid" id="F4K494"/>
<dbReference type="OMA" id="RFRRYEY"/>
<dbReference type="PhylomeDB" id="F4K494"/>
<dbReference type="Proteomes" id="UP000006548">
    <property type="component" value="Chromosome 5"/>
</dbReference>
<dbReference type="ExpressionAtlas" id="F4K494">
    <property type="expression patterns" value="baseline and differential"/>
</dbReference>
<dbReference type="GO" id="GO:0005856">
    <property type="term" value="C:cytoskeleton"/>
    <property type="evidence" value="ECO:0007669"/>
    <property type="project" value="UniProtKB-KW"/>
</dbReference>
<dbReference type="GO" id="GO:0005634">
    <property type="term" value="C:nucleus"/>
    <property type="evidence" value="ECO:0007005"/>
    <property type="project" value="TAIR"/>
</dbReference>
<dbReference type="GO" id="GO:0009524">
    <property type="term" value="C:phragmoplast"/>
    <property type="evidence" value="ECO:0007005"/>
    <property type="project" value="TAIR"/>
</dbReference>
<dbReference type="GO" id="GO:0046872">
    <property type="term" value="F:metal ion binding"/>
    <property type="evidence" value="ECO:0007669"/>
    <property type="project" value="UniProtKB-KW"/>
</dbReference>
<dbReference type="Gene3D" id="1.20.140.30">
    <property type="entry name" value="MOB kinase activator"/>
    <property type="match status" value="1"/>
</dbReference>
<dbReference type="InterPro" id="IPR005301">
    <property type="entry name" value="MOB_kinase_act_fam"/>
</dbReference>
<dbReference type="InterPro" id="IPR036703">
    <property type="entry name" value="MOB_kinase_act_sf"/>
</dbReference>
<dbReference type="PANTHER" id="PTHR22599">
    <property type="entry name" value="MPS ONE BINDER KINASE ACTIVATOR-LIKE MOB"/>
    <property type="match status" value="1"/>
</dbReference>
<dbReference type="Pfam" id="PF03637">
    <property type="entry name" value="Mob1_phocein"/>
    <property type="match status" value="1"/>
</dbReference>
<dbReference type="SMART" id="SM01388">
    <property type="entry name" value="Mob1_phocein"/>
    <property type="match status" value="1"/>
</dbReference>
<dbReference type="SUPFAM" id="SSF101152">
    <property type="entry name" value="Mob1/phocein"/>
    <property type="match status" value="1"/>
</dbReference>
<keyword id="KW-0963">Cytoplasm</keyword>
<keyword id="KW-0206">Cytoskeleton</keyword>
<keyword id="KW-0479">Metal-binding</keyword>
<keyword id="KW-0539">Nucleus</keyword>
<keyword id="KW-1185">Reference proteome</keyword>
<keyword id="KW-0862">Zinc</keyword>
<accession>F4K494</accession>
<protein>
    <recommendedName>
        <fullName>Putative MOB kinase activator-like 2B</fullName>
    </recommendedName>
    <alternativeName>
        <fullName>Mob1 homolog 2B</fullName>
    </alternativeName>
    <alternativeName>
        <fullName>Mps one binder kinase activator-like 2B</fullName>
    </alternativeName>
</protein>
<evidence type="ECO:0000250" key="1">
    <source>
        <dbReference type="UniProtKB" id="P40484"/>
    </source>
</evidence>
<evidence type="ECO:0000269" key="2">
    <source>
    </source>
</evidence>
<evidence type="ECO:0000303" key="3">
    <source>
    </source>
</evidence>
<evidence type="ECO:0000305" key="4"/>
<evidence type="ECO:0000312" key="5">
    <source>
        <dbReference type="Araport" id="AT5G20430"/>
    </source>
</evidence>
<evidence type="ECO:0000312" key="6">
    <source>
        <dbReference type="EMBL" id="AF296833"/>
    </source>
</evidence>
<reference key="1">
    <citation type="journal article" date="2000" name="Nature">
        <title>Sequence and analysis of chromosome 5 of the plant Arabidopsis thaliana.</title>
        <authorList>
            <person name="Tabata S."/>
            <person name="Kaneko T."/>
            <person name="Nakamura Y."/>
            <person name="Kotani H."/>
            <person name="Kato T."/>
            <person name="Asamizu E."/>
            <person name="Miyajima N."/>
            <person name="Sasamoto S."/>
            <person name="Kimura T."/>
            <person name="Hosouchi T."/>
            <person name="Kawashima K."/>
            <person name="Kohara M."/>
            <person name="Matsumoto M."/>
            <person name="Matsuno A."/>
            <person name="Muraki A."/>
            <person name="Nakayama S."/>
            <person name="Nakazaki N."/>
            <person name="Naruo K."/>
            <person name="Okumura S."/>
            <person name="Shinpo S."/>
            <person name="Takeuchi C."/>
            <person name="Wada T."/>
            <person name="Watanabe A."/>
            <person name="Yamada M."/>
            <person name="Yasuda M."/>
            <person name="Sato S."/>
            <person name="de la Bastide M."/>
            <person name="Huang E."/>
            <person name="Spiegel L."/>
            <person name="Gnoj L."/>
            <person name="O'Shaughnessy A."/>
            <person name="Preston R."/>
            <person name="Habermann K."/>
            <person name="Murray J."/>
            <person name="Johnson D."/>
            <person name="Rohlfing T."/>
            <person name="Nelson J."/>
            <person name="Stoneking T."/>
            <person name="Pepin K."/>
            <person name="Spieth J."/>
            <person name="Sekhon M."/>
            <person name="Armstrong J."/>
            <person name="Becker M."/>
            <person name="Belter E."/>
            <person name="Cordum H."/>
            <person name="Cordes M."/>
            <person name="Courtney L."/>
            <person name="Courtney W."/>
            <person name="Dante M."/>
            <person name="Du H."/>
            <person name="Edwards J."/>
            <person name="Fryman J."/>
            <person name="Haakensen B."/>
            <person name="Lamar E."/>
            <person name="Latreille P."/>
            <person name="Leonard S."/>
            <person name="Meyer R."/>
            <person name="Mulvaney E."/>
            <person name="Ozersky P."/>
            <person name="Riley A."/>
            <person name="Strowmatt C."/>
            <person name="Wagner-McPherson C."/>
            <person name="Wollam A."/>
            <person name="Yoakum M."/>
            <person name="Bell M."/>
            <person name="Dedhia N."/>
            <person name="Parnell L."/>
            <person name="Shah R."/>
            <person name="Rodriguez M."/>
            <person name="Hoon See L."/>
            <person name="Vil D."/>
            <person name="Baker J."/>
            <person name="Kirchoff K."/>
            <person name="Toth K."/>
            <person name="King L."/>
            <person name="Bahret A."/>
            <person name="Miller B."/>
            <person name="Marra M.A."/>
            <person name="Martienssen R."/>
            <person name="McCombie W.R."/>
            <person name="Wilson R.K."/>
            <person name="Murphy G."/>
            <person name="Bancroft I."/>
            <person name="Volckaert G."/>
            <person name="Wambutt R."/>
            <person name="Duesterhoeft A."/>
            <person name="Stiekema W."/>
            <person name="Pohl T."/>
            <person name="Entian K.-D."/>
            <person name="Terryn N."/>
            <person name="Hartley N."/>
            <person name="Bent E."/>
            <person name="Johnson S."/>
            <person name="Langham S.-A."/>
            <person name="McCullagh B."/>
            <person name="Robben J."/>
            <person name="Grymonprez B."/>
            <person name="Zimmermann W."/>
            <person name="Ramsperger U."/>
            <person name="Wedler H."/>
            <person name="Balke K."/>
            <person name="Wedler E."/>
            <person name="Peters S."/>
            <person name="van Staveren M."/>
            <person name="Dirkse W."/>
            <person name="Mooijman P."/>
            <person name="Klein Lankhorst R."/>
            <person name="Weitzenegger T."/>
            <person name="Bothe G."/>
            <person name="Rose M."/>
            <person name="Hauf J."/>
            <person name="Berneiser S."/>
            <person name="Hempel S."/>
            <person name="Feldpausch M."/>
            <person name="Lamberth S."/>
            <person name="Villarroel R."/>
            <person name="Gielen J."/>
            <person name="Ardiles W."/>
            <person name="Bents O."/>
            <person name="Lemcke K."/>
            <person name="Kolesov G."/>
            <person name="Mayer K.F.X."/>
            <person name="Rudd S."/>
            <person name="Schoof H."/>
            <person name="Schueller C."/>
            <person name="Zaccaria P."/>
            <person name="Mewes H.-W."/>
            <person name="Bevan M."/>
            <person name="Fransz P.F."/>
        </authorList>
    </citation>
    <scope>NUCLEOTIDE SEQUENCE [LARGE SCALE GENOMIC DNA]</scope>
    <source>
        <strain>cv. Columbia</strain>
    </source>
</reference>
<reference key="2">
    <citation type="journal article" date="2017" name="Plant J.">
        <title>Araport11: a complete reannotation of the Arabidopsis thaliana reference genome.</title>
        <authorList>
            <person name="Cheng C.Y."/>
            <person name="Krishnakumar V."/>
            <person name="Chan A.P."/>
            <person name="Thibaud-Nissen F."/>
            <person name="Schobel S."/>
            <person name="Town C.D."/>
        </authorList>
    </citation>
    <scope>GENOME REANNOTATION</scope>
    <source>
        <strain>cv. Columbia</strain>
    </source>
</reference>
<reference key="3">
    <citation type="journal article" date="2004" name="Plant J.">
        <title>Molecular dissection of plant cytokinesis and phragmoplast structure: a survey of GFP-tagged proteins.</title>
        <authorList>
            <person name="Van Damme D."/>
            <person name="Bouget F.-Y."/>
            <person name="Van Poucke K."/>
            <person name="Inze D."/>
            <person name="Geelen D."/>
        </authorList>
    </citation>
    <scope>SUBCELLULAR LOCATION</scope>
</reference>
<reference key="4">
    <citation type="journal article" date="2007" name="Evol. Bioinform. Online">
        <title>Characterization and evolution of the cell cycle-associated mob domain-containing proteins in eukaryotes.</title>
        <authorList>
            <person name="Vitulo N."/>
            <person name="Vezzi A."/>
            <person name="Galla G."/>
            <person name="Citterio S."/>
            <person name="Marino G."/>
            <person name="Ruperti B."/>
            <person name="Zermiani M."/>
            <person name="Albertini E."/>
            <person name="Valle G."/>
            <person name="Barcaccia G."/>
        </authorList>
    </citation>
    <scope>GENE FAMILY</scope>
    <scope>NOMENCLATURE</scope>
</reference>
<name>MOB2B_ARATH</name>
<proteinExistence type="uncertain"/>
<gene>
    <name evidence="3" type="primary">MOB2B</name>
    <name evidence="5" type="ordered locus">At5g20430</name>
    <name evidence="6" type="ORF">F7C8.20</name>
</gene>
<organism>
    <name type="scientific">Arabidopsis thaliana</name>
    <name type="common">Mouse-ear cress</name>
    <dbReference type="NCBI Taxonomy" id="3702"/>
    <lineage>
        <taxon>Eukaryota</taxon>
        <taxon>Viridiplantae</taxon>
        <taxon>Streptophyta</taxon>
        <taxon>Embryophyta</taxon>
        <taxon>Tracheophyta</taxon>
        <taxon>Spermatophyta</taxon>
        <taxon>Magnoliopsida</taxon>
        <taxon>eudicotyledons</taxon>
        <taxon>Gunneridae</taxon>
        <taxon>Pentapetalae</taxon>
        <taxon>rosids</taxon>
        <taxon>malvids</taxon>
        <taxon>Brassicales</taxon>
        <taxon>Brassicaceae</taxon>
        <taxon>Camelineae</taxon>
        <taxon>Arabidopsis</taxon>
    </lineage>
</organism>
<feature type="chain" id="PRO_0000432420" description="Putative MOB kinase activator-like 2B">
    <location>
        <begin position="1"/>
        <end position="122"/>
    </location>
</feature>
<feature type="binding site" evidence="1">
    <location>
        <position position="69"/>
    </location>
    <ligand>
        <name>Zn(2+)</name>
        <dbReference type="ChEBI" id="CHEBI:29105"/>
    </ligand>
</feature>
<feature type="binding site" evidence="1">
    <location>
        <position position="74"/>
    </location>
    <ligand>
        <name>Zn(2+)</name>
        <dbReference type="ChEBI" id="CHEBI:29105"/>
    </ligand>
</feature>